<gene>
    <name type="primary">RFPL4B</name>
    <name type="synonym">RNF211</name>
</gene>
<sequence>MAKRLQAELSCPVCLDFFSCSISLSCTHVFCFDCIQRYILENHDFRAMCPLCRDVVKVPALEEWQVSVLTLMTKQHNSRLEQSLHVREELRHFREDVTLDAATASSLLVFSNDLRSAQCKKIHHDLTKDPRLACVLGTPCFSSGQHYWEVEVGEVKSWSLGVCKEPADRKSNDLFPEHGFWISMKAGAIHANTHLERIPASPRLRRVGIFLDADLEEIQFFDVDNNVLIYTHDGFFSLELLCPFFCLELLGEGESGNVLTICP</sequence>
<keyword id="KW-0479">Metal-binding</keyword>
<keyword id="KW-1267">Proteomics identification</keyword>
<keyword id="KW-1185">Reference proteome</keyword>
<keyword id="KW-0862">Zinc</keyword>
<keyword id="KW-0863">Zinc-finger</keyword>
<name>RFPLB_HUMAN</name>
<reference key="1">
    <citation type="journal article" date="2004" name="Nat. Genet.">
        <title>Complete sequencing and characterization of 21,243 full-length human cDNAs.</title>
        <authorList>
            <person name="Ota T."/>
            <person name="Suzuki Y."/>
            <person name="Nishikawa T."/>
            <person name="Otsuki T."/>
            <person name="Sugiyama T."/>
            <person name="Irie R."/>
            <person name="Wakamatsu A."/>
            <person name="Hayashi K."/>
            <person name="Sato H."/>
            <person name="Nagai K."/>
            <person name="Kimura K."/>
            <person name="Makita H."/>
            <person name="Sekine M."/>
            <person name="Obayashi M."/>
            <person name="Nishi T."/>
            <person name="Shibahara T."/>
            <person name="Tanaka T."/>
            <person name="Ishii S."/>
            <person name="Yamamoto J."/>
            <person name="Saito K."/>
            <person name="Kawai Y."/>
            <person name="Isono Y."/>
            <person name="Nakamura Y."/>
            <person name="Nagahari K."/>
            <person name="Murakami K."/>
            <person name="Yasuda T."/>
            <person name="Iwayanagi T."/>
            <person name="Wagatsuma M."/>
            <person name="Shiratori A."/>
            <person name="Sudo H."/>
            <person name="Hosoiri T."/>
            <person name="Kaku Y."/>
            <person name="Kodaira H."/>
            <person name="Kondo H."/>
            <person name="Sugawara M."/>
            <person name="Takahashi M."/>
            <person name="Kanda K."/>
            <person name="Yokoi T."/>
            <person name="Furuya T."/>
            <person name="Kikkawa E."/>
            <person name="Omura Y."/>
            <person name="Abe K."/>
            <person name="Kamihara K."/>
            <person name="Katsuta N."/>
            <person name="Sato K."/>
            <person name="Tanikawa M."/>
            <person name="Yamazaki M."/>
            <person name="Ninomiya K."/>
            <person name="Ishibashi T."/>
            <person name="Yamashita H."/>
            <person name="Murakawa K."/>
            <person name="Fujimori K."/>
            <person name="Tanai H."/>
            <person name="Kimata M."/>
            <person name="Watanabe M."/>
            <person name="Hiraoka S."/>
            <person name="Chiba Y."/>
            <person name="Ishida S."/>
            <person name="Ono Y."/>
            <person name="Takiguchi S."/>
            <person name="Watanabe S."/>
            <person name="Yosida M."/>
            <person name="Hotuta T."/>
            <person name="Kusano J."/>
            <person name="Kanehori K."/>
            <person name="Takahashi-Fujii A."/>
            <person name="Hara H."/>
            <person name="Tanase T.-O."/>
            <person name="Nomura Y."/>
            <person name="Togiya S."/>
            <person name="Komai F."/>
            <person name="Hara R."/>
            <person name="Takeuchi K."/>
            <person name="Arita M."/>
            <person name="Imose N."/>
            <person name="Musashino K."/>
            <person name="Yuuki H."/>
            <person name="Oshima A."/>
            <person name="Sasaki N."/>
            <person name="Aotsuka S."/>
            <person name="Yoshikawa Y."/>
            <person name="Matsunawa H."/>
            <person name="Ichihara T."/>
            <person name="Shiohata N."/>
            <person name="Sano S."/>
            <person name="Moriya S."/>
            <person name="Momiyama H."/>
            <person name="Satoh N."/>
            <person name="Takami S."/>
            <person name="Terashima Y."/>
            <person name="Suzuki O."/>
            <person name="Nakagawa S."/>
            <person name="Senoh A."/>
            <person name="Mizoguchi H."/>
            <person name="Goto Y."/>
            <person name="Shimizu F."/>
            <person name="Wakebe H."/>
            <person name="Hishigaki H."/>
            <person name="Watanabe T."/>
            <person name="Sugiyama A."/>
            <person name="Takemoto M."/>
            <person name="Kawakami B."/>
            <person name="Yamazaki M."/>
            <person name="Watanabe K."/>
            <person name="Kumagai A."/>
            <person name="Itakura S."/>
            <person name="Fukuzumi Y."/>
            <person name="Fujimori Y."/>
            <person name="Komiyama M."/>
            <person name="Tashiro H."/>
            <person name="Tanigami A."/>
            <person name="Fujiwara T."/>
            <person name="Ono T."/>
            <person name="Yamada K."/>
            <person name="Fujii Y."/>
            <person name="Ozaki K."/>
            <person name="Hirao M."/>
            <person name="Ohmori Y."/>
            <person name="Kawabata A."/>
            <person name="Hikiji T."/>
            <person name="Kobatake N."/>
            <person name="Inagaki H."/>
            <person name="Ikema Y."/>
            <person name="Okamoto S."/>
            <person name="Okitani R."/>
            <person name="Kawakami T."/>
            <person name="Noguchi S."/>
            <person name="Itoh T."/>
            <person name="Shigeta K."/>
            <person name="Senba T."/>
            <person name="Matsumura K."/>
            <person name="Nakajima Y."/>
            <person name="Mizuno T."/>
            <person name="Morinaga M."/>
            <person name="Sasaki M."/>
            <person name="Togashi T."/>
            <person name="Oyama M."/>
            <person name="Hata H."/>
            <person name="Watanabe M."/>
            <person name="Komatsu T."/>
            <person name="Mizushima-Sugano J."/>
            <person name="Satoh T."/>
            <person name="Shirai Y."/>
            <person name="Takahashi Y."/>
            <person name="Nakagawa K."/>
            <person name="Okumura K."/>
            <person name="Nagase T."/>
            <person name="Nomura N."/>
            <person name="Kikuchi H."/>
            <person name="Masuho Y."/>
            <person name="Yamashita R."/>
            <person name="Nakai K."/>
            <person name="Yada T."/>
            <person name="Nakamura Y."/>
            <person name="Ohara O."/>
            <person name="Isogai T."/>
            <person name="Sugano S."/>
        </authorList>
    </citation>
    <scope>NUCLEOTIDE SEQUENCE [LARGE SCALE MRNA]</scope>
    <source>
        <tissue>Testis</tissue>
    </source>
</reference>
<reference key="2">
    <citation type="journal article" date="2004" name="Genome Res.">
        <title>The status, quality, and expansion of the NIH full-length cDNA project: the Mammalian Gene Collection (MGC).</title>
        <authorList>
            <consortium name="The MGC Project Team"/>
        </authorList>
    </citation>
    <scope>NUCLEOTIDE SEQUENCE [LARGE SCALE MRNA]</scope>
    <source>
        <tissue>Testis</tissue>
    </source>
</reference>
<protein>
    <recommendedName>
        <fullName>Ret finger protein-like 4B</fullName>
    </recommendedName>
    <alternativeName>
        <fullName>RING finger protein 211</fullName>
    </alternativeName>
</protein>
<organism>
    <name type="scientific">Homo sapiens</name>
    <name type="common">Human</name>
    <dbReference type="NCBI Taxonomy" id="9606"/>
    <lineage>
        <taxon>Eukaryota</taxon>
        <taxon>Metazoa</taxon>
        <taxon>Chordata</taxon>
        <taxon>Craniata</taxon>
        <taxon>Vertebrata</taxon>
        <taxon>Euteleostomi</taxon>
        <taxon>Mammalia</taxon>
        <taxon>Eutheria</taxon>
        <taxon>Euarchontoglires</taxon>
        <taxon>Primates</taxon>
        <taxon>Haplorrhini</taxon>
        <taxon>Catarrhini</taxon>
        <taxon>Hominidae</taxon>
        <taxon>Homo</taxon>
    </lineage>
</organism>
<evidence type="ECO:0000255" key="1">
    <source>
        <dbReference type="PROSITE-ProRule" id="PRU00175"/>
    </source>
</evidence>
<evidence type="ECO:0000255" key="2">
    <source>
        <dbReference type="PROSITE-ProRule" id="PRU00548"/>
    </source>
</evidence>
<evidence type="ECO:0000305" key="3"/>
<feature type="chain" id="PRO_0000274600" description="Ret finger protein-like 4B">
    <location>
        <begin position="1"/>
        <end position="263"/>
    </location>
</feature>
<feature type="domain" description="B30.2/SPRY" evidence="2">
    <location>
        <begin position="76"/>
        <end position="263"/>
    </location>
</feature>
<feature type="zinc finger region" description="RING-type" evidence="1">
    <location>
        <begin position="11"/>
        <end position="53"/>
    </location>
</feature>
<feature type="sequence variant" id="VAR_044525" description="In dbSNP:rs11153361.">
    <original>G</original>
    <variation>D</variation>
    <location>
        <position position="234"/>
    </location>
</feature>
<feature type="sequence conflict" description="In Ref. 1; BAC85513." evidence="3" ref="1">
    <original>E</original>
    <variation>G</variation>
    <location>
        <position position="177"/>
    </location>
</feature>
<accession>Q6ZWI9</accession>
<accession>A2RU91</accession>
<proteinExistence type="evidence at protein level"/>
<dbReference type="EMBL" id="AK122906">
    <property type="protein sequence ID" value="BAC85513.1"/>
    <property type="molecule type" value="mRNA"/>
</dbReference>
<dbReference type="EMBL" id="BC132796">
    <property type="protein sequence ID" value="AAI32797.1"/>
    <property type="molecule type" value="mRNA"/>
</dbReference>
<dbReference type="EMBL" id="BC132798">
    <property type="protein sequence ID" value="AAI32799.1"/>
    <property type="molecule type" value="mRNA"/>
</dbReference>
<dbReference type="CCDS" id="CCDS34515.1"/>
<dbReference type="RefSeq" id="NP_001013756.2">
    <property type="nucleotide sequence ID" value="NM_001013734.3"/>
</dbReference>
<dbReference type="RefSeq" id="XP_016866386.1">
    <property type="nucleotide sequence ID" value="XM_017010897.1"/>
</dbReference>
<dbReference type="RefSeq" id="XP_016866387.1">
    <property type="nucleotide sequence ID" value="XM_017010898.1"/>
</dbReference>
<dbReference type="RefSeq" id="XP_054211493.1">
    <property type="nucleotide sequence ID" value="XM_054355518.1"/>
</dbReference>
<dbReference type="RefSeq" id="XP_054211494.1">
    <property type="nucleotide sequence ID" value="XM_054355519.1"/>
</dbReference>
<dbReference type="SMR" id="Q6ZWI9"/>
<dbReference type="BioGRID" id="138138">
    <property type="interactions" value="48"/>
</dbReference>
<dbReference type="FunCoup" id="Q6ZWI9">
    <property type="interactions" value="42"/>
</dbReference>
<dbReference type="IntAct" id="Q6ZWI9">
    <property type="interactions" value="40"/>
</dbReference>
<dbReference type="STRING" id="9606.ENSP00000423391"/>
<dbReference type="iPTMnet" id="Q6ZWI9"/>
<dbReference type="PhosphoSitePlus" id="Q6ZWI9"/>
<dbReference type="BioMuta" id="RFPL4B"/>
<dbReference type="DMDM" id="212287933"/>
<dbReference type="MassIVE" id="Q6ZWI9"/>
<dbReference type="PaxDb" id="9606-ENSP00000423391"/>
<dbReference type="PeptideAtlas" id="Q6ZWI9"/>
<dbReference type="Antibodypedia" id="55115">
    <property type="antibodies" value="125 antibodies from 22 providers"/>
</dbReference>
<dbReference type="DNASU" id="442247"/>
<dbReference type="Ensembl" id="ENST00000441065.3">
    <property type="protein sequence ID" value="ENSP00000423391.1"/>
    <property type="gene ID" value="ENSG00000251258.2"/>
</dbReference>
<dbReference type="GeneID" id="442247"/>
<dbReference type="KEGG" id="hsa:442247"/>
<dbReference type="MANE-Select" id="ENST00000441065.3">
    <property type="protein sequence ID" value="ENSP00000423391.1"/>
    <property type="RefSeq nucleotide sequence ID" value="NM_001013734.3"/>
    <property type="RefSeq protein sequence ID" value="NP_001013756.2"/>
</dbReference>
<dbReference type="UCSC" id="uc003pvx.1">
    <property type="organism name" value="human"/>
</dbReference>
<dbReference type="AGR" id="HGNC:33264"/>
<dbReference type="CTD" id="442247"/>
<dbReference type="GeneCards" id="RFPL4B"/>
<dbReference type="HGNC" id="HGNC:33264">
    <property type="gene designation" value="RFPL4B"/>
</dbReference>
<dbReference type="HPA" id="ENSG00000251258">
    <property type="expression patterns" value="Tissue enriched (testis)"/>
</dbReference>
<dbReference type="neXtProt" id="NX_Q6ZWI9"/>
<dbReference type="OpenTargets" id="ENSG00000251258"/>
<dbReference type="PharmGKB" id="PA162401195"/>
<dbReference type="VEuPathDB" id="HostDB:ENSG00000251258"/>
<dbReference type="eggNOG" id="KOG2177">
    <property type="taxonomic scope" value="Eukaryota"/>
</dbReference>
<dbReference type="GeneTree" id="ENSGT00940000163194"/>
<dbReference type="HOGENOM" id="CLU_013137_7_1_1"/>
<dbReference type="InParanoid" id="Q6ZWI9"/>
<dbReference type="OMA" id="FCFHCMQ"/>
<dbReference type="OrthoDB" id="128536at2759"/>
<dbReference type="PAN-GO" id="Q6ZWI9">
    <property type="GO annotations" value="0 GO annotations based on evolutionary models"/>
</dbReference>
<dbReference type="PhylomeDB" id="Q6ZWI9"/>
<dbReference type="TreeFam" id="TF317532"/>
<dbReference type="PathwayCommons" id="Q6ZWI9"/>
<dbReference type="SignaLink" id="Q6ZWI9"/>
<dbReference type="SIGNOR" id="Q6ZWI9"/>
<dbReference type="BioGRID-ORCS" id="442247">
    <property type="hits" value="12 hits in 1188 CRISPR screens"/>
</dbReference>
<dbReference type="GenomeRNAi" id="442247"/>
<dbReference type="Pharos" id="Q6ZWI9">
    <property type="development level" value="Tdark"/>
</dbReference>
<dbReference type="PRO" id="PR:Q6ZWI9"/>
<dbReference type="Proteomes" id="UP000005640">
    <property type="component" value="Chromosome 6"/>
</dbReference>
<dbReference type="RNAct" id="Q6ZWI9">
    <property type="molecule type" value="protein"/>
</dbReference>
<dbReference type="Bgee" id="ENSG00000251258">
    <property type="expression patterns" value="Expressed in primordial germ cell in gonad and 16 other cell types or tissues"/>
</dbReference>
<dbReference type="GO" id="GO:0005737">
    <property type="term" value="C:cytoplasm"/>
    <property type="evidence" value="ECO:0000318"/>
    <property type="project" value="GO_Central"/>
</dbReference>
<dbReference type="GO" id="GO:0061630">
    <property type="term" value="F:ubiquitin protein ligase activity"/>
    <property type="evidence" value="ECO:0000318"/>
    <property type="project" value="GO_Central"/>
</dbReference>
<dbReference type="GO" id="GO:0008270">
    <property type="term" value="F:zinc ion binding"/>
    <property type="evidence" value="ECO:0007669"/>
    <property type="project" value="UniProtKB-KW"/>
</dbReference>
<dbReference type="GO" id="GO:0045087">
    <property type="term" value="P:innate immune response"/>
    <property type="evidence" value="ECO:0000318"/>
    <property type="project" value="GO_Central"/>
</dbReference>
<dbReference type="GO" id="GO:0010468">
    <property type="term" value="P:regulation of gene expression"/>
    <property type="evidence" value="ECO:0000318"/>
    <property type="project" value="GO_Central"/>
</dbReference>
<dbReference type="CDD" id="cd16623">
    <property type="entry name" value="RING-HC_RFPL4B"/>
    <property type="match status" value="1"/>
</dbReference>
<dbReference type="Gene3D" id="2.60.120.920">
    <property type="match status" value="1"/>
</dbReference>
<dbReference type="Gene3D" id="3.30.40.10">
    <property type="entry name" value="Zinc/RING finger domain, C3HC4 (zinc finger)"/>
    <property type="match status" value="1"/>
</dbReference>
<dbReference type="InterPro" id="IPR001870">
    <property type="entry name" value="B30.2/SPRY"/>
</dbReference>
<dbReference type="InterPro" id="IPR043136">
    <property type="entry name" value="B30.2/SPRY_sf"/>
</dbReference>
<dbReference type="InterPro" id="IPR003879">
    <property type="entry name" value="Butyrophylin_SPRY"/>
</dbReference>
<dbReference type="InterPro" id="IPR013320">
    <property type="entry name" value="ConA-like_dom_sf"/>
</dbReference>
<dbReference type="InterPro" id="IPR006574">
    <property type="entry name" value="PRY"/>
</dbReference>
<dbReference type="InterPro" id="IPR003877">
    <property type="entry name" value="SPRY_dom"/>
</dbReference>
<dbReference type="InterPro" id="IPR050143">
    <property type="entry name" value="TRIM/RBCC"/>
</dbReference>
<dbReference type="InterPro" id="IPR001841">
    <property type="entry name" value="Znf_RING"/>
</dbReference>
<dbReference type="InterPro" id="IPR013083">
    <property type="entry name" value="Znf_RING/FYVE/PHD"/>
</dbReference>
<dbReference type="InterPro" id="IPR017907">
    <property type="entry name" value="Znf_RING_CS"/>
</dbReference>
<dbReference type="PANTHER" id="PTHR24103">
    <property type="entry name" value="E3 UBIQUITIN-PROTEIN LIGASE TRIM"/>
    <property type="match status" value="1"/>
</dbReference>
<dbReference type="Pfam" id="PF13765">
    <property type="entry name" value="PRY"/>
    <property type="match status" value="1"/>
</dbReference>
<dbReference type="Pfam" id="PF00622">
    <property type="entry name" value="SPRY"/>
    <property type="match status" value="1"/>
</dbReference>
<dbReference type="Pfam" id="PF15227">
    <property type="entry name" value="zf-C3HC4_4"/>
    <property type="match status" value="1"/>
</dbReference>
<dbReference type="PRINTS" id="PR01407">
    <property type="entry name" value="BUTYPHLNCDUF"/>
</dbReference>
<dbReference type="SMART" id="SM00589">
    <property type="entry name" value="PRY"/>
    <property type="match status" value="1"/>
</dbReference>
<dbReference type="SMART" id="SM00184">
    <property type="entry name" value="RING"/>
    <property type="match status" value="1"/>
</dbReference>
<dbReference type="SMART" id="SM00449">
    <property type="entry name" value="SPRY"/>
    <property type="match status" value="1"/>
</dbReference>
<dbReference type="SUPFAM" id="SSF49899">
    <property type="entry name" value="Concanavalin A-like lectins/glucanases"/>
    <property type="match status" value="1"/>
</dbReference>
<dbReference type="SUPFAM" id="SSF57850">
    <property type="entry name" value="RING/U-box"/>
    <property type="match status" value="1"/>
</dbReference>
<dbReference type="PROSITE" id="PS50188">
    <property type="entry name" value="B302_SPRY"/>
    <property type="match status" value="1"/>
</dbReference>
<dbReference type="PROSITE" id="PS00518">
    <property type="entry name" value="ZF_RING_1"/>
    <property type="match status" value="1"/>
</dbReference>
<dbReference type="PROSITE" id="PS50089">
    <property type="entry name" value="ZF_RING_2"/>
    <property type="match status" value="1"/>
</dbReference>